<protein>
    <recommendedName>
        <fullName evidence="1">Cytidine deaminase</fullName>
        <ecNumber evidence="1">3.5.4.5</ecNumber>
    </recommendedName>
    <alternativeName>
        <fullName evidence="1">Cytidine aminohydrolase</fullName>
        <shortName evidence="1">CDA</shortName>
    </alternativeName>
</protein>
<keyword id="KW-0002">3D-structure</keyword>
<keyword id="KW-0903">Direct protein sequencing</keyword>
<keyword id="KW-0378">Hydrolase</keyword>
<keyword id="KW-0479">Metal-binding</keyword>
<keyword id="KW-1185">Reference proteome</keyword>
<keyword id="KW-0862">Zinc</keyword>
<comment type="function">
    <text>This enzyme scavenges exogenous and endogenous cytidine and 2'-deoxycytidine for UMP synthesis.</text>
</comment>
<comment type="catalytic activity">
    <reaction evidence="1">
        <text>cytidine + H2O + H(+) = uridine + NH4(+)</text>
        <dbReference type="Rhea" id="RHEA:16069"/>
        <dbReference type="ChEBI" id="CHEBI:15377"/>
        <dbReference type="ChEBI" id="CHEBI:15378"/>
        <dbReference type="ChEBI" id="CHEBI:16704"/>
        <dbReference type="ChEBI" id="CHEBI:17562"/>
        <dbReference type="ChEBI" id="CHEBI:28938"/>
        <dbReference type="EC" id="3.5.4.5"/>
    </reaction>
</comment>
<comment type="catalytic activity">
    <reaction evidence="1">
        <text>2'-deoxycytidine + H2O + H(+) = 2'-deoxyuridine + NH4(+)</text>
        <dbReference type="Rhea" id="RHEA:13433"/>
        <dbReference type="ChEBI" id="CHEBI:15377"/>
        <dbReference type="ChEBI" id="CHEBI:15378"/>
        <dbReference type="ChEBI" id="CHEBI:15698"/>
        <dbReference type="ChEBI" id="CHEBI:16450"/>
        <dbReference type="ChEBI" id="CHEBI:28938"/>
        <dbReference type="EC" id="3.5.4.5"/>
    </reaction>
</comment>
<comment type="cofactor">
    <cofactor evidence="3 4 5">
        <name>Zn(2+)</name>
        <dbReference type="ChEBI" id="CHEBI:29105"/>
    </cofactor>
    <text evidence="3 4 5">Binds 1 zinc ion.</text>
</comment>
<comment type="subunit">
    <text evidence="1 3 4 5">Homodimer.</text>
</comment>
<comment type="interaction">
    <interactant intactId="EBI-550703">
        <id>P0ABF6</id>
    </interactant>
    <interactant intactId="EBI-550703">
        <id>P0ABF6</id>
        <label>cdd</label>
    </interactant>
    <organismsDiffer>false</organismsDiffer>
    <experiments>2</experiments>
</comment>
<comment type="domain">
    <text>Each monomer is composed of a small N-terminal alpha-helical domain and two larger core domains that have nearly identical tertiary structures and are related by approximate two-fold symmetry, but lack homology.</text>
</comment>
<comment type="similarity">
    <text evidence="1">Belongs to the cytidine and deoxycytidylate deaminase family.</text>
</comment>
<comment type="sequence caution" evidence="6">
    <conflict type="frameshift">
        <sequence resource="EMBL-CDS" id="CAA44849"/>
    </conflict>
</comment>
<gene>
    <name evidence="1" type="primary">cdd</name>
    <name type="ordered locus">b2143</name>
    <name type="ordered locus">JW2131</name>
</gene>
<sequence length="294" mass="31540">MHPRFQTAFAQLADNLQSALEPILADKYFPALLTGEQVSSLKSATGLDEDALAFALLPLAAACARTPLSNFNVGAIARGVSGTWYFGANMEFIGATMQQTVHAEQSAISHAWLSGEKALAAITVNYTPCGHCRQFMNELNSGLDLRIHLPGREAHALRDYLPDAFGPKDLEIKTLLMDEQDHGYALTGDALSQAAIAAANRSHMPYSKSPSGVALECKDGRIFSGSYAENAAFNPTLPPLQGALILLNLKGYDYPDIQRAVLAEKADAPLIQWDATSATLKALGCHSIDRVLLA</sequence>
<reference key="1">
    <citation type="journal article" date="1992" name="Biochemistry">
        <title>Cloning and nucleotide sequence of the Escherichia coli cytidine deaminase (ccd) gene.</title>
        <authorList>
            <person name="Yang C."/>
            <person name="Carlow D."/>
            <person name="Wolfenden R."/>
            <person name="Short S.A."/>
        </authorList>
    </citation>
    <scope>NUCLEOTIDE SEQUENCE [GENOMIC DNA]</scope>
    <scope>PARTIAL PROTEIN SEQUENCE</scope>
    <source>
        <strain>K12</strain>
    </source>
</reference>
<reference key="2">
    <citation type="submission" date="1991-11" db="EMBL/GenBank/DDBJ databases">
        <title>Complete sequence of Escherichia coli cytidine deaminase gene.</title>
        <authorList>
            <person name="Montgomery D.S."/>
            <person name="Drake C."/>
            <person name="Purvis I.J."/>
        </authorList>
    </citation>
    <scope>NUCLEOTIDE SEQUENCE [GENOMIC DNA]</scope>
    <source>
        <strain>K12</strain>
    </source>
</reference>
<reference key="3">
    <citation type="submission" date="1993-10" db="EMBL/GenBank/DDBJ databases">
        <title>Automated multiplex sequencing of the E.coli genome.</title>
        <authorList>
            <person name="Richterich P."/>
            <person name="Lakey N."/>
            <person name="Gryan G."/>
            <person name="Jaehn L."/>
            <person name="Mintz L."/>
            <person name="Robison K."/>
            <person name="Church G.M."/>
        </authorList>
    </citation>
    <scope>NUCLEOTIDE SEQUENCE [GENOMIC DNA]</scope>
    <source>
        <strain>K12 / BHB2600</strain>
    </source>
</reference>
<reference key="4">
    <citation type="journal article" date="1997" name="Science">
        <title>The complete genome sequence of Escherichia coli K-12.</title>
        <authorList>
            <person name="Blattner F.R."/>
            <person name="Plunkett G. III"/>
            <person name="Bloch C.A."/>
            <person name="Perna N.T."/>
            <person name="Burland V."/>
            <person name="Riley M."/>
            <person name="Collado-Vides J."/>
            <person name="Glasner J.D."/>
            <person name="Rode C.K."/>
            <person name="Mayhew G.F."/>
            <person name="Gregor J."/>
            <person name="Davis N.W."/>
            <person name="Kirkpatrick H.A."/>
            <person name="Goeden M.A."/>
            <person name="Rose D.J."/>
            <person name="Mau B."/>
            <person name="Shao Y."/>
        </authorList>
    </citation>
    <scope>NUCLEOTIDE SEQUENCE [LARGE SCALE GENOMIC DNA]</scope>
    <source>
        <strain>K12 / MG1655 / ATCC 47076</strain>
    </source>
</reference>
<reference key="5">
    <citation type="journal article" date="2006" name="Mol. Syst. Biol.">
        <title>Highly accurate genome sequences of Escherichia coli K-12 strains MG1655 and W3110.</title>
        <authorList>
            <person name="Hayashi K."/>
            <person name="Morooka N."/>
            <person name="Yamamoto Y."/>
            <person name="Fujita K."/>
            <person name="Isono K."/>
            <person name="Choi S."/>
            <person name="Ohtsubo E."/>
            <person name="Baba T."/>
            <person name="Wanner B.L."/>
            <person name="Mori H."/>
            <person name="Horiuchi T."/>
        </authorList>
    </citation>
    <scope>NUCLEOTIDE SEQUENCE [LARGE SCALE GENOMIC DNA]</scope>
    <source>
        <strain>K12 / W3110 / ATCC 27325 / DSM 5911</strain>
    </source>
</reference>
<reference key="6">
    <citation type="journal article" date="1989" name="Mol. Microbiol.">
        <title>CRP/cAMP- and CytR-regulated promoters in Escherichia coli K12: the cdd promoter.</title>
        <authorList>
            <person name="Valentin-Hansen P."/>
            <person name="Holst B."/>
            <person name="Josephsen J."/>
            <person name="Hammer K."/>
            <person name="Albrechtsen B."/>
        </authorList>
    </citation>
    <scope>NUCLEOTIDE SEQUENCE [GENOMIC DNA] OF 1-77</scope>
    <source>
        <strain>K12</strain>
    </source>
</reference>
<reference key="7">
    <citation type="journal article" date="1989" name="Biochemistry">
        <title>Binding of pyrimidin-2-one ribonucleoside by cytidine deaminase as the transition-state analogue 3,4-dihydrouridine and the contribution of the 4-hydroxyl group to its binding affinity.</title>
        <authorList>
            <person name="Frick L."/>
            <person name="Yang C."/>
            <person name="Marquez V.E."/>
            <person name="Wolfenden R."/>
        </authorList>
    </citation>
    <scope>PROTEIN SEQUENCE OF 1-22</scope>
    <scope>CHARACTERIZATION</scope>
</reference>
<reference key="8">
    <citation type="journal article" date="1993" name="Proc. Natl. Acad. Sci. U.S.A.">
        <title>Identifying proteins from two-dimensional gels by molecular mass searching of peptide fragments in protein sequence databases.</title>
        <authorList>
            <person name="Henzel W.J."/>
            <person name="Billeci T.M."/>
            <person name="Stults J.T."/>
            <person name="Wong S.C."/>
            <person name="Grimley C."/>
            <person name="Watanabe C."/>
        </authorList>
    </citation>
    <scope>PROTEIN SEQUENCE OF 1-17</scope>
</reference>
<reference key="9">
    <citation type="journal article" date="1996" name="Mol. Microbiol.">
        <title>FIS is a regulator of metabolism in Escherichia coli.</title>
        <authorList>
            <person name="Gonzalez-Gil G."/>
            <person name="Bringmann P."/>
            <person name="Kahmann R."/>
        </authorList>
    </citation>
    <scope>PROTEIN SEQUENCE OF 1-15</scope>
    <source>
        <strain>K12</strain>
    </source>
</reference>
<reference key="10">
    <citation type="journal article" date="1996" name="J. Bacteriol.">
        <title>Amplification of a novel gene, sanA, abolishes a vancomycin-sensitive defect in Escherichia coli.</title>
        <authorList>
            <person name="Rida S."/>
            <person name="Caillet J."/>
            <person name="Alix J.-H."/>
        </authorList>
    </citation>
    <scope>NUCLEOTIDE SEQUENCE [GENOMIC DNA] OF 256-294</scope>
    <source>
        <strain>K12</strain>
    </source>
</reference>
<reference key="11">
    <citation type="journal article" date="1994" name="J. Mol. Biol.">
        <title>Cytidine deaminase. The 2.3 A crystal structure of an enzyme: transition-state analog complex.</title>
        <authorList>
            <person name="Betts L."/>
            <person name="Xiang S."/>
            <person name="Short S.A."/>
            <person name="Wolfenden R."/>
            <person name="Carter C.W. Jr."/>
        </authorList>
    </citation>
    <scope>X-RAY CRYSTALLOGRAPHY (2.3 ANGSTROMS) IN COMPLEX WITH SUBSTRATE ANALOG AND ZINC IONS</scope>
    <scope>COFACTOR</scope>
    <scope>ACTIVE SITE</scope>
</reference>
<reference key="12">
    <citation type="journal article" date="1996" name="Biochemistry">
        <title>Cytidine deaminase complexed to 3-deazacytidine: a 'valence buffer' in zinc enzyme catalysis.</title>
        <authorList>
            <person name="Xiang S."/>
            <person name="Short S.A."/>
            <person name="Wolfenden R."/>
            <person name="Carter C.W. Jr."/>
        </authorList>
    </citation>
    <scope>X-RAY CRYSTALLOGRAPHY (2.3 ANGSTROMS) IN COMPLEX WITH SUBSTRATE ANALOG AND ZINC IONS</scope>
    <scope>COFACTOR</scope>
    <scope>ACTIVE SITE</scope>
</reference>
<reference key="13">
    <citation type="journal article" date="1997" name="Biochemistry">
        <title>The structure of the cytidine deaminase-product complex provides evidence for efficient proton transfer and ground-state destabilization.</title>
        <authorList>
            <person name="Xiang S."/>
            <person name="Short S.A."/>
            <person name="Wolfenden R."/>
            <person name="Carter C.W. Jr."/>
        </authorList>
    </citation>
    <scope>X-RAY CRYSTALLOGRAPHY (2.3 ANGSTROMS) IN COMPLEX WITH URIDINE AND ZINC IONS</scope>
    <scope>COFACTOR</scope>
    <scope>ACTIVE SITE</scope>
</reference>
<proteinExistence type="evidence at protein level"/>
<dbReference type="EC" id="3.5.4.5" evidence="1"/>
<dbReference type="EMBL" id="M60916">
    <property type="protein sequence ID" value="AAA23542.1"/>
    <property type="molecule type" value="Genomic_DNA"/>
</dbReference>
<dbReference type="EMBL" id="X63144">
    <property type="protein sequence ID" value="CAA44849.1"/>
    <property type="status" value="ALT_FRAME"/>
    <property type="molecule type" value="Genomic_DNA"/>
</dbReference>
<dbReference type="EMBL" id="U00007">
    <property type="protein sequence ID" value="AAA60533.1"/>
    <property type="molecule type" value="Genomic_DNA"/>
</dbReference>
<dbReference type="EMBL" id="U00096">
    <property type="protein sequence ID" value="AAC75204.1"/>
    <property type="molecule type" value="Genomic_DNA"/>
</dbReference>
<dbReference type="EMBL" id="AP009048">
    <property type="protein sequence ID" value="BAE76620.1"/>
    <property type="molecule type" value="Genomic_DNA"/>
</dbReference>
<dbReference type="EMBL" id="X16419">
    <property type="protein sequence ID" value="CAA34441.1"/>
    <property type="molecule type" value="Genomic_DNA"/>
</dbReference>
<dbReference type="EMBL" id="Z47804">
    <property type="protein sequence ID" value="CAA87765.1"/>
    <property type="molecule type" value="Genomic_DNA"/>
</dbReference>
<dbReference type="PIR" id="F64982">
    <property type="entry name" value="F64982"/>
</dbReference>
<dbReference type="RefSeq" id="NP_416648.1">
    <property type="nucleotide sequence ID" value="NC_000913.3"/>
</dbReference>
<dbReference type="RefSeq" id="WP_000553555.1">
    <property type="nucleotide sequence ID" value="NZ_SSZK01000011.1"/>
</dbReference>
<dbReference type="PDB" id="1AF2">
    <property type="method" value="X-ray"/>
    <property type="resolution" value="2.30 A"/>
    <property type="chains" value="A=1-294"/>
</dbReference>
<dbReference type="PDB" id="1ALN">
    <property type="method" value="X-ray"/>
    <property type="resolution" value="2.30 A"/>
    <property type="chains" value="A=1-294"/>
</dbReference>
<dbReference type="PDB" id="1CTT">
    <property type="method" value="X-ray"/>
    <property type="resolution" value="2.20 A"/>
    <property type="chains" value="A=1-294"/>
</dbReference>
<dbReference type="PDB" id="1CTU">
    <property type="method" value="X-ray"/>
    <property type="resolution" value="2.30 A"/>
    <property type="chains" value="A=1-294"/>
</dbReference>
<dbReference type="PDBsum" id="1AF2"/>
<dbReference type="PDBsum" id="1ALN"/>
<dbReference type="PDBsum" id="1CTT"/>
<dbReference type="PDBsum" id="1CTU"/>
<dbReference type="SMR" id="P0ABF6"/>
<dbReference type="BioGRID" id="4263038">
    <property type="interactions" value="10"/>
</dbReference>
<dbReference type="BioGRID" id="851005">
    <property type="interactions" value="2"/>
</dbReference>
<dbReference type="DIP" id="DIP-36169N"/>
<dbReference type="FunCoup" id="P0ABF6">
    <property type="interactions" value="345"/>
</dbReference>
<dbReference type="IntAct" id="P0ABF6">
    <property type="interactions" value="2"/>
</dbReference>
<dbReference type="STRING" id="511145.b2143"/>
<dbReference type="DrugBank" id="DB04385">
    <property type="generic name" value="3-Deazacytidine"/>
</dbReference>
<dbReference type="DrugBank" id="DB03068">
    <property type="generic name" value="Zebularine"/>
</dbReference>
<dbReference type="jPOST" id="P0ABF6"/>
<dbReference type="PaxDb" id="511145-b2143"/>
<dbReference type="EnsemblBacteria" id="AAC75204">
    <property type="protein sequence ID" value="AAC75204"/>
    <property type="gene ID" value="b2143"/>
</dbReference>
<dbReference type="GeneID" id="93775039"/>
<dbReference type="GeneID" id="946663"/>
<dbReference type="KEGG" id="ecj:JW2131"/>
<dbReference type="KEGG" id="eco:b2143"/>
<dbReference type="KEGG" id="ecoc:C3026_12010"/>
<dbReference type="PATRIC" id="fig|1411691.4.peg.99"/>
<dbReference type="EchoBASE" id="EB0135"/>
<dbReference type="eggNOG" id="COG0295">
    <property type="taxonomic scope" value="Bacteria"/>
</dbReference>
<dbReference type="HOGENOM" id="CLU_052424_0_0_6"/>
<dbReference type="InParanoid" id="P0ABF6"/>
<dbReference type="OMA" id="NYSPCGH"/>
<dbReference type="OrthoDB" id="9795347at2"/>
<dbReference type="PhylomeDB" id="P0ABF6"/>
<dbReference type="BioCyc" id="EcoCyc:CYTIDEAM-MONOMER"/>
<dbReference type="BioCyc" id="MetaCyc:CYTIDEAM-MONOMER"/>
<dbReference type="BRENDA" id="3.5.4.5">
    <property type="organism ID" value="2026"/>
</dbReference>
<dbReference type="EvolutionaryTrace" id="P0ABF6"/>
<dbReference type="PRO" id="PR:P0ABF6"/>
<dbReference type="Proteomes" id="UP000000625">
    <property type="component" value="Chromosome"/>
</dbReference>
<dbReference type="GO" id="GO:0005829">
    <property type="term" value="C:cytosol"/>
    <property type="evidence" value="ECO:0000314"/>
    <property type="project" value="EcoCyc"/>
</dbReference>
<dbReference type="GO" id="GO:0004126">
    <property type="term" value="F:cytidine deaminase activity"/>
    <property type="evidence" value="ECO:0000314"/>
    <property type="project" value="EcoCyc"/>
</dbReference>
<dbReference type="GO" id="GO:0042802">
    <property type="term" value="F:identical protein binding"/>
    <property type="evidence" value="ECO:0000353"/>
    <property type="project" value="IntAct"/>
</dbReference>
<dbReference type="GO" id="GO:0042803">
    <property type="term" value="F:protein homodimerization activity"/>
    <property type="evidence" value="ECO:0000314"/>
    <property type="project" value="EcoCyc"/>
</dbReference>
<dbReference type="GO" id="GO:0001884">
    <property type="term" value="F:pyrimidine nucleoside binding"/>
    <property type="evidence" value="ECO:0000314"/>
    <property type="project" value="EcoliWiki"/>
</dbReference>
<dbReference type="GO" id="GO:0008270">
    <property type="term" value="F:zinc ion binding"/>
    <property type="evidence" value="ECO:0000314"/>
    <property type="project" value="EcoCyc"/>
</dbReference>
<dbReference type="GO" id="GO:0009972">
    <property type="term" value="P:cytidine deamination"/>
    <property type="evidence" value="ECO:0000315"/>
    <property type="project" value="EcoCyc"/>
</dbReference>
<dbReference type="GO" id="GO:0006217">
    <property type="term" value="P:deoxycytidine catabolic process"/>
    <property type="evidence" value="ECO:0000314"/>
    <property type="project" value="EcoCyc"/>
</dbReference>
<dbReference type="GO" id="GO:0015949">
    <property type="term" value="P:nucleobase-containing small molecule interconversion"/>
    <property type="evidence" value="ECO:0000314"/>
    <property type="project" value="EcoliWiki"/>
</dbReference>
<dbReference type="CDD" id="cd01283">
    <property type="entry name" value="cytidine_deaminase"/>
    <property type="match status" value="2"/>
</dbReference>
<dbReference type="FunFam" id="3.40.140.10:FF:000006">
    <property type="entry name" value="Cytidine deaminase"/>
    <property type="match status" value="1"/>
</dbReference>
<dbReference type="FunFam" id="3.40.140.10:FF:000007">
    <property type="entry name" value="Cytidine deaminase"/>
    <property type="match status" value="1"/>
</dbReference>
<dbReference type="Gene3D" id="3.40.140.10">
    <property type="entry name" value="Cytidine Deaminase, domain 2"/>
    <property type="match status" value="2"/>
</dbReference>
<dbReference type="HAMAP" id="MF_01558">
    <property type="entry name" value="Cyt_deam"/>
    <property type="match status" value="1"/>
</dbReference>
<dbReference type="InterPro" id="IPR016192">
    <property type="entry name" value="APOBEC/CMP_deaminase_Zn-bd"/>
</dbReference>
<dbReference type="InterPro" id="IPR002125">
    <property type="entry name" value="CMP_dCMP_dom"/>
</dbReference>
<dbReference type="InterPro" id="IPR013171">
    <property type="entry name" value="Cyd/dCyd_deaminase_Zn-bd"/>
</dbReference>
<dbReference type="InterPro" id="IPR050202">
    <property type="entry name" value="Cyt/Deoxycyt_deaminase"/>
</dbReference>
<dbReference type="InterPro" id="IPR006263">
    <property type="entry name" value="Cyt_deam_dimer"/>
</dbReference>
<dbReference type="InterPro" id="IPR016193">
    <property type="entry name" value="Cytidine_deaminase-like"/>
</dbReference>
<dbReference type="InterPro" id="IPR020797">
    <property type="entry name" value="Cytidine_deaminase_bacteria"/>
</dbReference>
<dbReference type="NCBIfam" id="TIGR01355">
    <property type="entry name" value="cyt_deam_dimer"/>
    <property type="match status" value="1"/>
</dbReference>
<dbReference type="NCBIfam" id="NF006537">
    <property type="entry name" value="PRK09027.1"/>
    <property type="match status" value="1"/>
</dbReference>
<dbReference type="PANTHER" id="PTHR11644">
    <property type="entry name" value="CYTIDINE DEAMINASE"/>
    <property type="match status" value="1"/>
</dbReference>
<dbReference type="PANTHER" id="PTHR11644:SF2">
    <property type="entry name" value="CYTIDINE DEAMINASE"/>
    <property type="match status" value="1"/>
</dbReference>
<dbReference type="Pfam" id="PF00383">
    <property type="entry name" value="dCMP_cyt_deam_1"/>
    <property type="match status" value="1"/>
</dbReference>
<dbReference type="Pfam" id="PF08211">
    <property type="entry name" value="dCMP_cyt_deam_2"/>
    <property type="match status" value="1"/>
</dbReference>
<dbReference type="PIRSF" id="PIRSF006334">
    <property type="entry name" value="Cdd_plus_pseudo"/>
    <property type="match status" value="1"/>
</dbReference>
<dbReference type="SUPFAM" id="SSF53927">
    <property type="entry name" value="Cytidine deaminase-like"/>
    <property type="match status" value="2"/>
</dbReference>
<dbReference type="PROSITE" id="PS00903">
    <property type="entry name" value="CYT_DCMP_DEAMINASES_1"/>
    <property type="match status" value="1"/>
</dbReference>
<dbReference type="PROSITE" id="PS51747">
    <property type="entry name" value="CYT_DCMP_DEAMINASES_2"/>
    <property type="match status" value="2"/>
</dbReference>
<evidence type="ECO:0000255" key="1">
    <source>
        <dbReference type="HAMAP-Rule" id="MF_01558"/>
    </source>
</evidence>
<evidence type="ECO:0000255" key="2">
    <source>
        <dbReference type="PROSITE-ProRule" id="PRU01083"/>
    </source>
</evidence>
<evidence type="ECO:0000269" key="3">
    <source>
    </source>
</evidence>
<evidence type="ECO:0000269" key="4">
    <source>
    </source>
</evidence>
<evidence type="ECO:0000269" key="5">
    <source>
    </source>
</evidence>
<evidence type="ECO:0000305" key="6"/>
<evidence type="ECO:0000305" key="7">
    <source>
    </source>
</evidence>
<evidence type="ECO:0000305" key="8">
    <source>
    </source>
</evidence>
<evidence type="ECO:0000305" key="9">
    <source>
    </source>
</evidence>
<evidence type="ECO:0007829" key="10">
    <source>
        <dbReference type="PDB" id="1CTT"/>
    </source>
</evidence>
<organism>
    <name type="scientific">Escherichia coli (strain K12)</name>
    <dbReference type="NCBI Taxonomy" id="83333"/>
    <lineage>
        <taxon>Bacteria</taxon>
        <taxon>Pseudomonadati</taxon>
        <taxon>Pseudomonadota</taxon>
        <taxon>Gammaproteobacteria</taxon>
        <taxon>Enterobacterales</taxon>
        <taxon>Enterobacteriaceae</taxon>
        <taxon>Escherichia</taxon>
    </lineage>
</organism>
<name>CDD_ECOLI</name>
<feature type="chain" id="PRO_0000171649" description="Cytidine deaminase">
    <location>
        <begin position="1"/>
        <end position="294"/>
    </location>
</feature>
<feature type="domain" description="CMP/dCMP-type deaminase 1" evidence="2">
    <location>
        <begin position="48"/>
        <end position="168"/>
    </location>
</feature>
<feature type="domain" description="CMP/dCMP-type deaminase 2" evidence="2">
    <location>
        <begin position="186"/>
        <end position="294"/>
    </location>
</feature>
<feature type="active site" description="Proton donor" evidence="7 8 9">
    <location>
        <position position="104"/>
    </location>
</feature>
<feature type="binding site" evidence="7 8 9">
    <location>
        <begin position="89"/>
        <end position="91"/>
    </location>
    <ligand>
        <name>substrate</name>
    </ligand>
</feature>
<feature type="binding site" evidence="7 8 9">
    <location>
        <position position="102"/>
    </location>
    <ligand>
        <name>Zn(2+)</name>
        <dbReference type="ChEBI" id="CHEBI:29105"/>
        <note>catalytic</note>
    </ligand>
</feature>
<feature type="binding site" evidence="7 8 9">
    <location>
        <position position="129"/>
    </location>
    <ligand>
        <name>Zn(2+)</name>
        <dbReference type="ChEBI" id="CHEBI:29105"/>
        <note>catalytic</note>
    </ligand>
</feature>
<feature type="binding site" evidence="7 8 9">
    <location>
        <position position="132"/>
    </location>
    <ligand>
        <name>Zn(2+)</name>
        <dbReference type="ChEBI" id="CHEBI:29105"/>
        <note>catalytic</note>
    </ligand>
</feature>
<feature type="sequence conflict" description="In Ref. 9; AA sequence." evidence="6" ref="9">
    <original>R</original>
    <variation>I</variation>
    <location>
        <position position="4"/>
    </location>
</feature>
<feature type="sequence conflict" description="In Ref. 6." evidence="6" ref="6">
    <original>PLAAACARTPLSNFNVGAIA</original>
    <variation>RWRRPVRVRHCRILMLAQLR</variation>
    <location>
        <begin position="58"/>
        <end position="77"/>
    </location>
</feature>
<feature type="helix" evidence="10">
    <location>
        <begin position="3"/>
        <end position="5"/>
    </location>
</feature>
<feature type="helix" evidence="10">
    <location>
        <begin position="6"/>
        <end position="10"/>
    </location>
</feature>
<feature type="helix" evidence="10">
    <location>
        <begin position="14"/>
        <end position="20"/>
    </location>
</feature>
<feature type="turn" evidence="10">
    <location>
        <begin position="21"/>
        <end position="25"/>
    </location>
</feature>
<feature type="strand" evidence="10">
    <location>
        <begin position="31"/>
        <end position="33"/>
    </location>
</feature>
<feature type="helix" evidence="10">
    <location>
        <begin position="35"/>
        <end position="44"/>
    </location>
</feature>
<feature type="helix" evidence="10">
    <location>
        <begin position="49"/>
        <end position="62"/>
    </location>
</feature>
<feature type="turn" evidence="10">
    <location>
        <begin position="67"/>
        <end position="69"/>
    </location>
</feature>
<feature type="strand" evidence="10">
    <location>
        <begin position="74"/>
        <end position="79"/>
    </location>
</feature>
<feature type="strand" evidence="10">
    <location>
        <begin position="84"/>
        <end position="88"/>
    </location>
</feature>
<feature type="helix" evidence="10">
    <location>
        <begin position="97"/>
        <end position="99"/>
    </location>
</feature>
<feature type="helix" evidence="10">
    <location>
        <begin position="103"/>
        <end position="113"/>
    </location>
</feature>
<feature type="strand" evidence="10">
    <location>
        <begin position="119"/>
        <end position="126"/>
    </location>
</feature>
<feature type="helix" evidence="10">
    <location>
        <begin position="130"/>
        <end position="136"/>
    </location>
</feature>
<feature type="helix" evidence="10">
    <location>
        <begin position="142"/>
        <end position="144"/>
    </location>
</feature>
<feature type="strand" evidence="10">
    <location>
        <begin position="146"/>
        <end position="148"/>
    </location>
</feature>
<feature type="helix" evidence="10">
    <location>
        <begin position="157"/>
        <end position="160"/>
    </location>
</feature>
<feature type="helix" evidence="10">
    <location>
        <begin position="167"/>
        <end position="170"/>
    </location>
</feature>
<feature type="helix" evidence="10">
    <location>
        <begin position="190"/>
        <end position="200"/>
    </location>
</feature>
<feature type="turn" evidence="10">
    <location>
        <begin position="205"/>
        <end position="207"/>
    </location>
</feature>
<feature type="strand" evidence="10">
    <location>
        <begin position="211"/>
        <end position="217"/>
    </location>
</feature>
<feature type="strand" evidence="10">
    <location>
        <begin position="222"/>
        <end position="226"/>
    </location>
</feature>
<feature type="helix" evidence="10">
    <location>
        <begin position="239"/>
        <end position="249"/>
    </location>
</feature>
<feature type="helix" evidence="10">
    <location>
        <begin position="254"/>
        <end position="256"/>
    </location>
</feature>
<feature type="strand" evidence="10">
    <location>
        <begin position="257"/>
        <end position="264"/>
    </location>
</feature>
<feature type="helix" evidence="10">
    <location>
        <begin position="273"/>
        <end position="283"/>
    </location>
</feature>
<feature type="strand" evidence="10">
    <location>
        <begin position="288"/>
        <end position="292"/>
    </location>
</feature>
<accession>P0ABF6</accession>
<accession>P13652</accession>
<accession>Q2MAT6</accession>